<feature type="chain" id="PRO_0000413511" description="Large ribosomal subunit protein eL27">
    <location>
        <begin position="1"/>
        <end position="144"/>
    </location>
</feature>
<reference key="1">
    <citation type="submission" date="2008-04" db="EMBL/GenBank/DDBJ databases">
        <title>cDNA library made from Tetrahymena thermophila cells (2008).</title>
        <authorList>
            <person name="Coyne R.S."/>
            <person name="Thiagarajan M."/>
            <person name="Eisen J.A."/>
            <person name="Pearlman R.E."/>
            <person name="Garg J."/>
        </authorList>
    </citation>
    <scope>NUCLEOTIDE SEQUENCE [LARGE SCALE MRNA]</scope>
    <source>
        <strain>CU428</strain>
    </source>
</reference>
<keyword id="KW-0002">3D-structure</keyword>
<keyword id="KW-0963">Cytoplasm</keyword>
<keyword id="KW-0687">Ribonucleoprotein</keyword>
<keyword id="KW-0689">Ribosomal protein</keyword>
<dbReference type="EMBL" id="FF566845">
    <property type="status" value="NOT_ANNOTATED_CDS"/>
    <property type="molecule type" value="mRNA"/>
</dbReference>
<dbReference type="PDB" id="4V8P">
    <property type="method" value="X-ray"/>
    <property type="resolution" value="3.52 A"/>
    <property type="chains" value="AN/DN/FN/HN=1-144"/>
</dbReference>
<dbReference type="PDBsum" id="4V8P"/>
<dbReference type="SMR" id="P0DJ19"/>
<dbReference type="IntAct" id="P0DJ19">
    <property type="interactions" value="1"/>
</dbReference>
<dbReference type="GO" id="GO:0005737">
    <property type="term" value="C:cytoplasm"/>
    <property type="evidence" value="ECO:0007669"/>
    <property type="project" value="UniProtKB-SubCell"/>
</dbReference>
<dbReference type="GO" id="GO:1990904">
    <property type="term" value="C:ribonucleoprotein complex"/>
    <property type="evidence" value="ECO:0007669"/>
    <property type="project" value="UniProtKB-KW"/>
</dbReference>
<dbReference type="GO" id="GO:0005840">
    <property type="term" value="C:ribosome"/>
    <property type="evidence" value="ECO:0007669"/>
    <property type="project" value="UniProtKB-KW"/>
</dbReference>
<dbReference type="GO" id="GO:0003735">
    <property type="term" value="F:structural constituent of ribosome"/>
    <property type="evidence" value="ECO:0007669"/>
    <property type="project" value="InterPro"/>
</dbReference>
<dbReference type="GO" id="GO:0006412">
    <property type="term" value="P:translation"/>
    <property type="evidence" value="ECO:0007669"/>
    <property type="project" value="InterPro"/>
</dbReference>
<dbReference type="CDD" id="cd06090">
    <property type="entry name" value="KOW_RPL27"/>
    <property type="match status" value="1"/>
</dbReference>
<dbReference type="FunFam" id="2.30.30.770:FF:000001">
    <property type="entry name" value="60S ribosomal protein L27"/>
    <property type="match status" value="1"/>
</dbReference>
<dbReference type="Gene3D" id="2.30.30.770">
    <property type="match status" value="1"/>
</dbReference>
<dbReference type="InterPro" id="IPR001141">
    <property type="entry name" value="Ribosomal_eL27"/>
</dbReference>
<dbReference type="InterPro" id="IPR041991">
    <property type="entry name" value="Ribosomal_eL27_KOW"/>
</dbReference>
<dbReference type="InterPro" id="IPR038655">
    <property type="entry name" value="Ribosomal_eL27_sf"/>
</dbReference>
<dbReference type="InterPro" id="IPR008991">
    <property type="entry name" value="Translation_prot_SH3-like_sf"/>
</dbReference>
<dbReference type="PANTHER" id="PTHR10497">
    <property type="entry name" value="60S RIBOSOMAL PROTEIN L27"/>
    <property type="match status" value="1"/>
</dbReference>
<dbReference type="Pfam" id="PF01777">
    <property type="entry name" value="Ribosomal_L27e"/>
    <property type="match status" value="1"/>
</dbReference>
<dbReference type="SUPFAM" id="SSF50104">
    <property type="entry name" value="Translation proteins SH3-like domain"/>
    <property type="match status" value="1"/>
</dbReference>
<accession>P0DJ19</accession>
<organism>
    <name type="scientific">Tetrahymena thermophila</name>
    <dbReference type="NCBI Taxonomy" id="5911"/>
    <lineage>
        <taxon>Eukaryota</taxon>
        <taxon>Sar</taxon>
        <taxon>Alveolata</taxon>
        <taxon>Ciliophora</taxon>
        <taxon>Intramacronucleata</taxon>
        <taxon>Oligohymenophorea</taxon>
        <taxon>Hymenostomatida</taxon>
        <taxon>Tetrahymenina</taxon>
        <taxon>Tetrahymenidae</taxon>
        <taxon>Tetrahymena</taxon>
    </lineage>
</organism>
<comment type="subcellular location">
    <subcellularLocation>
        <location evidence="1">Cytoplasm</location>
    </subcellularLocation>
</comment>
<comment type="similarity">
    <text evidence="2">Belongs to the eukaryotic ribosomal protein eL27 family.</text>
</comment>
<protein>
    <recommendedName>
        <fullName evidence="2">Large ribosomal subunit protein eL27</fullName>
    </recommendedName>
    <alternativeName>
        <fullName>60S ribosomal protein L27</fullName>
    </alternativeName>
</protein>
<proteinExistence type="evidence at protein level"/>
<evidence type="ECO:0000250" key="1"/>
<evidence type="ECO:0000305" key="2"/>
<sequence>MAKFLKYGRVVILLQGRFAGKKAVIVKSSEDGTKDRKFGHVLVAGVERSPKKVTKRMGSKKIQKRTSVKPFIKYVNLNHIMPTRYSVKELCDFKELVKEDKIKNNAKSEVRDTLKKVFVEKYRTINPEEKSASHTKFFFSKLRF</sequence>
<gene>
    <name type="primary">RPL27</name>
</gene>
<name>RL27_TETTH</name>